<name>ATPA_SHELP</name>
<gene>
    <name evidence="1" type="primary">atpA</name>
    <name type="ordered locus">Shew_3847</name>
</gene>
<keyword id="KW-0066">ATP synthesis</keyword>
<keyword id="KW-0067">ATP-binding</keyword>
<keyword id="KW-0997">Cell inner membrane</keyword>
<keyword id="KW-1003">Cell membrane</keyword>
<keyword id="KW-0139">CF(1)</keyword>
<keyword id="KW-0375">Hydrogen ion transport</keyword>
<keyword id="KW-0406">Ion transport</keyword>
<keyword id="KW-0472">Membrane</keyword>
<keyword id="KW-0547">Nucleotide-binding</keyword>
<keyword id="KW-1185">Reference proteome</keyword>
<keyword id="KW-1278">Translocase</keyword>
<keyword id="KW-0813">Transport</keyword>
<dbReference type="EC" id="7.1.2.2" evidence="1"/>
<dbReference type="EMBL" id="CP000606">
    <property type="protein sequence ID" value="ABO25710.1"/>
    <property type="molecule type" value="Genomic_DNA"/>
</dbReference>
<dbReference type="RefSeq" id="WP_011867638.1">
    <property type="nucleotide sequence ID" value="NC_009092.1"/>
</dbReference>
<dbReference type="SMR" id="A3QJR2"/>
<dbReference type="STRING" id="323850.Shew_3847"/>
<dbReference type="KEGG" id="slo:Shew_3847"/>
<dbReference type="eggNOG" id="COG0056">
    <property type="taxonomic scope" value="Bacteria"/>
</dbReference>
<dbReference type="HOGENOM" id="CLU_010091_2_1_6"/>
<dbReference type="OrthoDB" id="9803053at2"/>
<dbReference type="Proteomes" id="UP000001558">
    <property type="component" value="Chromosome"/>
</dbReference>
<dbReference type="GO" id="GO:0005886">
    <property type="term" value="C:plasma membrane"/>
    <property type="evidence" value="ECO:0007669"/>
    <property type="project" value="UniProtKB-SubCell"/>
</dbReference>
<dbReference type="GO" id="GO:0045259">
    <property type="term" value="C:proton-transporting ATP synthase complex"/>
    <property type="evidence" value="ECO:0007669"/>
    <property type="project" value="UniProtKB-KW"/>
</dbReference>
<dbReference type="GO" id="GO:0043531">
    <property type="term" value="F:ADP binding"/>
    <property type="evidence" value="ECO:0007669"/>
    <property type="project" value="TreeGrafter"/>
</dbReference>
<dbReference type="GO" id="GO:0005524">
    <property type="term" value="F:ATP binding"/>
    <property type="evidence" value="ECO:0007669"/>
    <property type="project" value="UniProtKB-UniRule"/>
</dbReference>
<dbReference type="GO" id="GO:0046933">
    <property type="term" value="F:proton-transporting ATP synthase activity, rotational mechanism"/>
    <property type="evidence" value="ECO:0007669"/>
    <property type="project" value="UniProtKB-UniRule"/>
</dbReference>
<dbReference type="CDD" id="cd18113">
    <property type="entry name" value="ATP-synt_F1_alpha_C"/>
    <property type="match status" value="1"/>
</dbReference>
<dbReference type="CDD" id="cd18116">
    <property type="entry name" value="ATP-synt_F1_alpha_N"/>
    <property type="match status" value="1"/>
</dbReference>
<dbReference type="CDD" id="cd01132">
    <property type="entry name" value="F1-ATPase_alpha_CD"/>
    <property type="match status" value="1"/>
</dbReference>
<dbReference type="FunFam" id="1.20.150.20:FF:000001">
    <property type="entry name" value="ATP synthase subunit alpha"/>
    <property type="match status" value="1"/>
</dbReference>
<dbReference type="FunFam" id="2.40.30.20:FF:000001">
    <property type="entry name" value="ATP synthase subunit alpha"/>
    <property type="match status" value="1"/>
</dbReference>
<dbReference type="FunFam" id="3.40.50.300:FF:000002">
    <property type="entry name" value="ATP synthase subunit alpha"/>
    <property type="match status" value="1"/>
</dbReference>
<dbReference type="Gene3D" id="2.40.30.20">
    <property type="match status" value="1"/>
</dbReference>
<dbReference type="Gene3D" id="1.20.150.20">
    <property type="entry name" value="ATP synthase alpha/beta chain, C-terminal domain"/>
    <property type="match status" value="1"/>
</dbReference>
<dbReference type="Gene3D" id="3.40.50.300">
    <property type="entry name" value="P-loop containing nucleotide triphosphate hydrolases"/>
    <property type="match status" value="1"/>
</dbReference>
<dbReference type="HAMAP" id="MF_01346">
    <property type="entry name" value="ATP_synth_alpha_bact"/>
    <property type="match status" value="1"/>
</dbReference>
<dbReference type="InterPro" id="IPR023366">
    <property type="entry name" value="ATP_synth_asu-like_sf"/>
</dbReference>
<dbReference type="InterPro" id="IPR000793">
    <property type="entry name" value="ATP_synth_asu_C"/>
</dbReference>
<dbReference type="InterPro" id="IPR038376">
    <property type="entry name" value="ATP_synth_asu_C_sf"/>
</dbReference>
<dbReference type="InterPro" id="IPR033732">
    <property type="entry name" value="ATP_synth_F1_a_nt-bd_dom"/>
</dbReference>
<dbReference type="InterPro" id="IPR005294">
    <property type="entry name" value="ATP_synth_F1_asu"/>
</dbReference>
<dbReference type="InterPro" id="IPR020003">
    <property type="entry name" value="ATPase_a/bsu_AS"/>
</dbReference>
<dbReference type="InterPro" id="IPR004100">
    <property type="entry name" value="ATPase_F1/V1/A1_a/bsu_N"/>
</dbReference>
<dbReference type="InterPro" id="IPR036121">
    <property type="entry name" value="ATPase_F1/V1/A1_a/bsu_N_sf"/>
</dbReference>
<dbReference type="InterPro" id="IPR000194">
    <property type="entry name" value="ATPase_F1/V1/A1_a/bsu_nucl-bd"/>
</dbReference>
<dbReference type="InterPro" id="IPR027417">
    <property type="entry name" value="P-loop_NTPase"/>
</dbReference>
<dbReference type="NCBIfam" id="TIGR00962">
    <property type="entry name" value="atpA"/>
    <property type="match status" value="1"/>
</dbReference>
<dbReference type="NCBIfam" id="NF009884">
    <property type="entry name" value="PRK13343.1"/>
    <property type="match status" value="1"/>
</dbReference>
<dbReference type="PANTHER" id="PTHR48082">
    <property type="entry name" value="ATP SYNTHASE SUBUNIT ALPHA, MITOCHONDRIAL"/>
    <property type="match status" value="1"/>
</dbReference>
<dbReference type="PANTHER" id="PTHR48082:SF2">
    <property type="entry name" value="ATP SYNTHASE SUBUNIT ALPHA, MITOCHONDRIAL"/>
    <property type="match status" value="1"/>
</dbReference>
<dbReference type="Pfam" id="PF00006">
    <property type="entry name" value="ATP-synt_ab"/>
    <property type="match status" value="1"/>
</dbReference>
<dbReference type="Pfam" id="PF00306">
    <property type="entry name" value="ATP-synt_ab_C"/>
    <property type="match status" value="1"/>
</dbReference>
<dbReference type="Pfam" id="PF02874">
    <property type="entry name" value="ATP-synt_ab_N"/>
    <property type="match status" value="1"/>
</dbReference>
<dbReference type="SUPFAM" id="SSF47917">
    <property type="entry name" value="C-terminal domain of alpha and beta subunits of F1 ATP synthase"/>
    <property type="match status" value="1"/>
</dbReference>
<dbReference type="SUPFAM" id="SSF50615">
    <property type="entry name" value="N-terminal domain of alpha and beta subunits of F1 ATP synthase"/>
    <property type="match status" value="1"/>
</dbReference>
<dbReference type="SUPFAM" id="SSF52540">
    <property type="entry name" value="P-loop containing nucleoside triphosphate hydrolases"/>
    <property type="match status" value="1"/>
</dbReference>
<dbReference type="PROSITE" id="PS00152">
    <property type="entry name" value="ATPASE_ALPHA_BETA"/>
    <property type="match status" value="1"/>
</dbReference>
<feature type="chain" id="PRO_0000339059" description="ATP synthase subunit alpha">
    <location>
        <begin position="1"/>
        <end position="513"/>
    </location>
</feature>
<feature type="binding site" evidence="1">
    <location>
        <begin position="169"/>
        <end position="176"/>
    </location>
    <ligand>
        <name>ATP</name>
        <dbReference type="ChEBI" id="CHEBI:30616"/>
    </ligand>
</feature>
<feature type="site" description="Required for activity" evidence="1">
    <location>
        <position position="373"/>
    </location>
</feature>
<evidence type="ECO:0000255" key="1">
    <source>
        <dbReference type="HAMAP-Rule" id="MF_01346"/>
    </source>
</evidence>
<proteinExistence type="inferred from homology"/>
<reference key="1">
    <citation type="submission" date="2007-03" db="EMBL/GenBank/DDBJ databases">
        <title>Complete sequence of Shewanella loihica PV-4.</title>
        <authorList>
            <consortium name="US DOE Joint Genome Institute"/>
            <person name="Copeland A."/>
            <person name="Lucas S."/>
            <person name="Lapidus A."/>
            <person name="Barry K."/>
            <person name="Detter J.C."/>
            <person name="Glavina del Rio T."/>
            <person name="Hammon N."/>
            <person name="Israni S."/>
            <person name="Dalin E."/>
            <person name="Tice H."/>
            <person name="Pitluck S."/>
            <person name="Chain P."/>
            <person name="Malfatti S."/>
            <person name="Shin M."/>
            <person name="Vergez L."/>
            <person name="Schmutz J."/>
            <person name="Larimer F."/>
            <person name="Land M."/>
            <person name="Hauser L."/>
            <person name="Kyrpides N."/>
            <person name="Mikhailova N."/>
            <person name="Romine M.F."/>
            <person name="Serres G."/>
            <person name="Fredrickson J."/>
            <person name="Tiedje J."/>
            <person name="Richardson P."/>
        </authorList>
    </citation>
    <scope>NUCLEOTIDE SEQUENCE [LARGE SCALE GENOMIC DNA]</scope>
    <source>
        <strain>ATCC BAA-1088 / PV-4</strain>
    </source>
</reference>
<sequence length="513" mass="55314">MQLNSTEISDLIKQRIEQFEVVSEARNEGTIVAVSDGIIRVHGLADVMQGEMIELPGNRYAIALNLERDSVGAVVMGPYADLAEGQKVKTTGRILEVPVGRGLLGRVVNTLGQPIDGKGPIDNDGFSPVEVIAPGVIERKSVDQPVQTGYKAVDSMIPIGRGQRELVIGDRQTGKTALAIDAIINQKDSGIKCVYVAVGQKASTIANVVRKLEEHGALANTVVVVATASEAAALQYLAPYSGCSMGEYFRDRGEDALIVYDDLSKQAVAYRQISLLLKRPPGREAYPGDVFYLHSRLLERASRVNAEYVEKFTNGEVKGQTGSLTALPIIETQAGDVSAFVPTNVISITDGQIFLETDLFNSGLRPAVNPGISVSRVGGAAQTKIIKKLSGGIRTALAQYRELAAFSQFASDLDDATRAQLEHGERVTELMKQKQYAPMSVADQSVSIFAAEKGYLKGVELNKIGDFEASLLSYMNSEHADLMKTINETGDYNADIEGGLKAGLDKFVETQTW</sequence>
<comment type="function">
    <text evidence="1">Produces ATP from ADP in the presence of a proton gradient across the membrane. The alpha chain is a regulatory subunit.</text>
</comment>
<comment type="catalytic activity">
    <reaction evidence="1">
        <text>ATP + H2O + 4 H(+)(in) = ADP + phosphate + 5 H(+)(out)</text>
        <dbReference type="Rhea" id="RHEA:57720"/>
        <dbReference type="ChEBI" id="CHEBI:15377"/>
        <dbReference type="ChEBI" id="CHEBI:15378"/>
        <dbReference type="ChEBI" id="CHEBI:30616"/>
        <dbReference type="ChEBI" id="CHEBI:43474"/>
        <dbReference type="ChEBI" id="CHEBI:456216"/>
        <dbReference type="EC" id="7.1.2.2"/>
    </reaction>
</comment>
<comment type="subunit">
    <text evidence="1">F-type ATPases have 2 components, CF(1) - the catalytic core - and CF(0) - the membrane proton channel. CF(1) has five subunits: alpha(3), beta(3), gamma(1), delta(1), epsilon(1). CF(0) has three main subunits: a(1), b(2) and c(9-12). The alpha and beta chains form an alternating ring which encloses part of the gamma chain. CF(1) is attached to CF(0) by a central stalk formed by the gamma and epsilon chains, while a peripheral stalk is formed by the delta and b chains.</text>
</comment>
<comment type="subcellular location">
    <subcellularLocation>
        <location evidence="1">Cell inner membrane</location>
        <topology evidence="1">Peripheral membrane protein</topology>
    </subcellularLocation>
</comment>
<comment type="similarity">
    <text evidence="1">Belongs to the ATPase alpha/beta chains family.</text>
</comment>
<organism>
    <name type="scientific">Shewanella loihica (strain ATCC BAA-1088 / PV-4)</name>
    <dbReference type="NCBI Taxonomy" id="323850"/>
    <lineage>
        <taxon>Bacteria</taxon>
        <taxon>Pseudomonadati</taxon>
        <taxon>Pseudomonadota</taxon>
        <taxon>Gammaproteobacteria</taxon>
        <taxon>Alteromonadales</taxon>
        <taxon>Shewanellaceae</taxon>
        <taxon>Shewanella</taxon>
    </lineage>
</organism>
<accession>A3QJR2</accession>
<protein>
    <recommendedName>
        <fullName evidence="1">ATP synthase subunit alpha</fullName>
        <ecNumber evidence="1">7.1.2.2</ecNumber>
    </recommendedName>
    <alternativeName>
        <fullName evidence="1">ATP synthase F1 sector subunit alpha</fullName>
    </alternativeName>
    <alternativeName>
        <fullName evidence="1">F-ATPase subunit alpha</fullName>
    </alternativeName>
</protein>